<evidence type="ECO:0000255" key="1">
    <source>
        <dbReference type="HAMAP-Rule" id="MF_01511"/>
    </source>
</evidence>
<feature type="chain" id="PRO_0000292049" description="GMP reductase">
    <location>
        <begin position="1"/>
        <end position="328"/>
    </location>
</feature>
<feature type="active site" description="Thioimidate intermediate" evidence="1">
    <location>
        <position position="176"/>
    </location>
</feature>
<feature type="binding site" evidence="1">
    <location>
        <begin position="205"/>
        <end position="228"/>
    </location>
    <ligand>
        <name>NADP(+)</name>
        <dbReference type="ChEBI" id="CHEBI:58349"/>
    </ligand>
</feature>
<keyword id="KW-0521">NADP</keyword>
<keyword id="KW-0560">Oxidoreductase</keyword>
<sequence length="328" mass="36303">MMENVFDYEDIQLIPAKCIVNSRSECDTTVTLGKHKFKLPVVPANMQTIIDERIATYLAENNYFYIMHRFQPEKRISFIRDMQSRGLIASISVGVKEDEYEFVQQLAAEHLTPEYITIDIAHGHSNAVINMIQHIKKHLPESFVIAGNVGTPEAVRELENAGADATKVGIGPGKVCITKIKTGFGTGGWQLAALRWCAKAASKPIIADGGIRTHGDVAKSIRFGATMVMIGSLFAGHEESPGETIEKDGKLYKEYFGSASEFQKGEKKNVEGKKMFVEHKGSLEDTLIEMEQDLQSSISYAGGTKLDSIRTVDYVVVKNSIFNGDKVY</sequence>
<reference key="1">
    <citation type="journal article" date="2007" name="J. Bacteriol.">
        <title>The complete genome sequence of Bacillus thuringiensis Al Hakam.</title>
        <authorList>
            <person name="Challacombe J.F."/>
            <person name="Altherr M.R."/>
            <person name="Xie G."/>
            <person name="Bhotika S.S."/>
            <person name="Brown N."/>
            <person name="Bruce D."/>
            <person name="Campbell C.S."/>
            <person name="Campbell M.L."/>
            <person name="Chen J."/>
            <person name="Chertkov O."/>
            <person name="Cleland C."/>
            <person name="Dimitrijevic M."/>
            <person name="Doggett N.A."/>
            <person name="Fawcett J.J."/>
            <person name="Glavina T."/>
            <person name="Goodwin L.A."/>
            <person name="Green L.D."/>
            <person name="Han C.S."/>
            <person name="Hill K.K."/>
            <person name="Hitchcock P."/>
            <person name="Jackson P.J."/>
            <person name="Keim P."/>
            <person name="Kewalramani A.R."/>
            <person name="Longmire J."/>
            <person name="Lucas S."/>
            <person name="Malfatti S."/>
            <person name="Martinez D."/>
            <person name="McMurry K."/>
            <person name="Meincke L.J."/>
            <person name="Misra M."/>
            <person name="Moseman B.L."/>
            <person name="Mundt M."/>
            <person name="Munk A.C."/>
            <person name="Okinaka R.T."/>
            <person name="Parson-Quintana B."/>
            <person name="Reilly L.P."/>
            <person name="Richardson P."/>
            <person name="Robinson D.L."/>
            <person name="Saunders E."/>
            <person name="Tapia R."/>
            <person name="Tesmer J.G."/>
            <person name="Thayer N."/>
            <person name="Thompson L.S."/>
            <person name="Tice H."/>
            <person name="Ticknor L.O."/>
            <person name="Wills P.L."/>
            <person name="Gilna P."/>
            <person name="Brettin T.S."/>
        </authorList>
    </citation>
    <scope>NUCLEOTIDE SEQUENCE [LARGE SCALE GENOMIC DNA]</scope>
    <source>
        <strain>Al Hakam</strain>
    </source>
</reference>
<dbReference type="EC" id="1.7.1.7" evidence="1"/>
<dbReference type="EMBL" id="CP000485">
    <property type="protein sequence ID" value="ABK88128.1"/>
    <property type="molecule type" value="Genomic_DNA"/>
</dbReference>
<dbReference type="SMR" id="A0RLN5"/>
<dbReference type="KEGG" id="btl:BALH_4963"/>
<dbReference type="HOGENOM" id="CLU_022552_5_0_9"/>
<dbReference type="GO" id="GO:0005829">
    <property type="term" value="C:cytosol"/>
    <property type="evidence" value="ECO:0007669"/>
    <property type="project" value="TreeGrafter"/>
</dbReference>
<dbReference type="GO" id="GO:1902560">
    <property type="term" value="C:GMP reductase complex"/>
    <property type="evidence" value="ECO:0007669"/>
    <property type="project" value="InterPro"/>
</dbReference>
<dbReference type="GO" id="GO:0003920">
    <property type="term" value="F:GMP reductase activity"/>
    <property type="evidence" value="ECO:0007669"/>
    <property type="project" value="UniProtKB-UniRule"/>
</dbReference>
<dbReference type="GO" id="GO:0016627">
    <property type="term" value="F:oxidoreductase activity, acting on the CH-CH group of donors"/>
    <property type="evidence" value="ECO:0007669"/>
    <property type="project" value="InterPro"/>
</dbReference>
<dbReference type="GO" id="GO:0006207">
    <property type="term" value="P:'de novo' pyrimidine nucleobase biosynthetic process"/>
    <property type="evidence" value="ECO:0007669"/>
    <property type="project" value="InterPro"/>
</dbReference>
<dbReference type="GO" id="GO:0006163">
    <property type="term" value="P:purine nucleotide metabolic process"/>
    <property type="evidence" value="ECO:0007669"/>
    <property type="project" value="UniProtKB-UniRule"/>
</dbReference>
<dbReference type="CDD" id="cd00381">
    <property type="entry name" value="IMPDH"/>
    <property type="match status" value="1"/>
</dbReference>
<dbReference type="FunFam" id="3.20.20.70:FF:000079">
    <property type="entry name" value="GMP reductase"/>
    <property type="match status" value="1"/>
</dbReference>
<dbReference type="Gene3D" id="3.20.20.70">
    <property type="entry name" value="Aldolase class I"/>
    <property type="match status" value="1"/>
</dbReference>
<dbReference type="HAMAP" id="MF_01511">
    <property type="entry name" value="GMP_reduct_type2"/>
    <property type="match status" value="1"/>
</dbReference>
<dbReference type="InterPro" id="IPR013785">
    <property type="entry name" value="Aldolase_TIM"/>
</dbReference>
<dbReference type="InterPro" id="IPR001295">
    <property type="entry name" value="Dihydroorotate_DH_CS"/>
</dbReference>
<dbReference type="InterPro" id="IPR050139">
    <property type="entry name" value="GMP_reductase"/>
</dbReference>
<dbReference type="InterPro" id="IPR005994">
    <property type="entry name" value="GuaC_type_2"/>
</dbReference>
<dbReference type="InterPro" id="IPR015875">
    <property type="entry name" value="IMP_DH/GMP_Rdtase_CS"/>
</dbReference>
<dbReference type="InterPro" id="IPR001093">
    <property type="entry name" value="IMP_DH_GMPRt"/>
</dbReference>
<dbReference type="NCBIfam" id="TIGR01306">
    <property type="entry name" value="GMP_reduct_2"/>
    <property type="match status" value="1"/>
</dbReference>
<dbReference type="NCBIfam" id="NF003966">
    <property type="entry name" value="PRK05458.1"/>
    <property type="match status" value="1"/>
</dbReference>
<dbReference type="PANTHER" id="PTHR43170">
    <property type="entry name" value="GMP REDUCTASE"/>
    <property type="match status" value="1"/>
</dbReference>
<dbReference type="PANTHER" id="PTHR43170:SF5">
    <property type="entry name" value="GMP REDUCTASE"/>
    <property type="match status" value="1"/>
</dbReference>
<dbReference type="Pfam" id="PF00478">
    <property type="entry name" value="IMPDH"/>
    <property type="match status" value="1"/>
</dbReference>
<dbReference type="PIRSF" id="PIRSF036500">
    <property type="entry name" value="GMP_red_Firmic"/>
    <property type="match status" value="1"/>
</dbReference>
<dbReference type="SMART" id="SM01240">
    <property type="entry name" value="IMPDH"/>
    <property type="match status" value="1"/>
</dbReference>
<dbReference type="SUPFAM" id="SSF51412">
    <property type="entry name" value="Inosine monophosphate dehydrogenase (IMPDH)"/>
    <property type="match status" value="1"/>
</dbReference>
<dbReference type="PROSITE" id="PS00487">
    <property type="entry name" value="IMP_DH_GMP_RED"/>
    <property type="match status" value="1"/>
</dbReference>
<gene>
    <name evidence="1" type="primary">guaC</name>
    <name type="ordered locus">BALH_4963</name>
</gene>
<protein>
    <recommendedName>
        <fullName evidence="1">GMP reductase</fullName>
        <ecNumber evidence="1">1.7.1.7</ecNumber>
    </recommendedName>
    <alternativeName>
        <fullName evidence="1">Guanosine 5'-monophosphate oxidoreductase</fullName>
        <shortName evidence="1">Guanosine monophosphate reductase</shortName>
    </alternativeName>
</protein>
<name>GUAC_BACAH</name>
<organism>
    <name type="scientific">Bacillus thuringiensis (strain Al Hakam)</name>
    <dbReference type="NCBI Taxonomy" id="412694"/>
    <lineage>
        <taxon>Bacteria</taxon>
        <taxon>Bacillati</taxon>
        <taxon>Bacillota</taxon>
        <taxon>Bacilli</taxon>
        <taxon>Bacillales</taxon>
        <taxon>Bacillaceae</taxon>
        <taxon>Bacillus</taxon>
        <taxon>Bacillus cereus group</taxon>
    </lineage>
</organism>
<accession>A0RLN5</accession>
<comment type="function">
    <text evidence="1">Catalyzes the irreversible NADPH-dependent deamination of GMP to IMP. It functions in the conversion of nucleobase, nucleoside and nucleotide derivatives of G to A nucleotides, and in maintaining the intracellular balance of A and G nucleotides.</text>
</comment>
<comment type="catalytic activity">
    <reaction evidence="1">
        <text>IMP + NH4(+) + NADP(+) = GMP + NADPH + 2 H(+)</text>
        <dbReference type="Rhea" id="RHEA:17185"/>
        <dbReference type="ChEBI" id="CHEBI:15378"/>
        <dbReference type="ChEBI" id="CHEBI:28938"/>
        <dbReference type="ChEBI" id="CHEBI:57783"/>
        <dbReference type="ChEBI" id="CHEBI:58053"/>
        <dbReference type="ChEBI" id="CHEBI:58115"/>
        <dbReference type="ChEBI" id="CHEBI:58349"/>
        <dbReference type="EC" id="1.7.1.7"/>
    </reaction>
</comment>
<comment type="similarity">
    <text evidence="1">Belongs to the IMPDH/GMPR family. GuaC type 2 subfamily.</text>
</comment>
<proteinExistence type="inferred from homology"/>